<name>MATP_HAEI8</name>
<protein>
    <recommendedName>
        <fullName evidence="1">Macrodomain Ter protein</fullName>
    </recommendedName>
</protein>
<reference key="1">
    <citation type="journal article" date="2005" name="J. Bacteriol.">
        <title>Genomic sequence of an otitis media isolate of nontypeable Haemophilus influenzae: comparative study with H. influenzae serotype d, strain KW20.</title>
        <authorList>
            <person name="Harrison A."/>
            <person name="Dyer D.W."/>
            <person name="Gillaspy A."/>
            <person name="Ray W.C."/>
            <person name="Mungur R."/>
            <person name="Carson M.B."/>
            <person name="Zhong H."/>
            <person name="Gipson J."/>
            <person name="Gipson M."/>
            <person name="Johnson L.S."/>
            <person name="Lewis L."/>
            <person name="Bakaletz L.O."/>
            <person name="Munson R.S. Jr."/>
        </authorList>
    </citation>
    <scope>NUCLEOTIDE SEQUENCE [LARGE SCALE GENOMIC DNA]</scope>
    <source>
        <strain>86-028NP</strain>
    </source>
</reference>
<sequence length="148" mass="17971">MKYQKLENQESNWKWIYLIRKHREGENITRYEERSLQEAKAQELLESQNYPSQIEEWIKNHLSPALPIKLDQAIRARRKRFFNGEKQHTKKKSIDLEYAVWLRLSKYSRKMKMTLSETITYMIDERESKAQFENQMAAMKTSLKNLLK</sequence>
<comment type="function">
    <text evidence="1">Required for spatial organization of the terminus region of the chromosome (Ter macrodomain) during the cell cycle. Prevents early segregation of duplicated Ter macrodomains during cell division. Binds specifically to matS, which is a 13 bp signature motif repeated within the Ter macrodomain.</text>
</comment>
<comment type="subunit">
    <text evidence="1">Homodimer.</text>
</comment>
<comment type="subcellular location">
    <subcellularLocation>
        <location evidence="1">Cytoplasm</location>
    </subcellularLocation>
</comment>
<comment type="similarity">
    <text evidence="1">Belongs to the MatP family.</text>
</comment>
<dbReference type="EMBL" id="CP000057">
    <property type="protein sequence ID" value="AAX88444.1"/>
    <property type="molecule type" value="Genomic_DNA"/>
</dbReference>
<dbReference type="RefSeq" id="WP_005662425.1">
    <property type="nucleotide sequence ID" value="NC_007146.2"/>
</dbReference>
<dbReference type="SMR" id="Q4QKK3"/>
<dbReference type="GeneID" id="93220378"/>
<dbReference type="KEGG" id="hit:NTHI1647"/>
<dbReference type="HOGENOM" id="CLU_142157_0_0_6"/>
<dbReference type="Proteomes" id="UP000002525">
    <property type="component" value="Chromosome"/>
</dbReference>
<dbReference type="GO" id="GO:0005737">
    <property type="term" value="C:cytoplasm"/>
    <property type="evidence" value="ECO:0007669"/>
    <property type="project" value="UniProtKB-SubCell"/>
</dbReference>
<dbReference type="GO" id="GO:0043565">
    <property type="term" value="F:sequence-specific DNA binding"/>
    <property type="evidence" value="ECO:0007669"/>
    <property type="project" value="UniProtKB-UniRule"/>
</dbReference>
<dbReference type="GO" id="GO:0051301">
    <property type="term" value="P:cell division"/>
    <property type="evidence" value="ECO:0007669"/>
    <property type="project" value="UniProtKB-UniRule"/>
</dbReference>
<dbReference type="GO" id="GO:0006355">
    <property type="term" value="P:regulation of DNA-templated transcription"/>
    <property type="evidence" value="ECO:0007669"/>
    <property type="project" value="InterPro"/>
</dbReference>
<dbReference type="Gene3D" id="1.20.1270.380">
    <property type="entry name" value="MatP, N-terminal domain"/>
    <property type="match status" value="1"/>
</dbReference>
<dbReference type="Gene3D" id="1.10.1220.10">
    <property type="entry name" value="Met repressor-like"/>
    <property type="match status" value="1"/>
</dbReference>
<dbReference type="HAMAP" id="MF_01073">
    <property type="entry name" value="MatP"/>
    <property type="match status" value="1"/>
</dbReference>
<dbReference type="InterPro" id="IPR013321">
    <property type="entry name" value="Arc_rbn_hlx_hlx"/>
</dbReference>
<dbReference type="InterPro" id="IPR009390">
    <property type="entry name" value="MatP"/>
</dbReference>
<dbReference type="InterPro" id="IPR035375">
    <property type="entry name" value="MatP_C"/>
</dbReference>
<dbReference type="InterPro" id="IPR035087">
    <property type="entry name" value="MatP_N"/>
</dbReference>
<dbReference type="InterPro" id="IPR038339">
    <property type="entry name" value="MatP_N_sf"/>
</dbReference>
<dbReference type="NCBIfam" id="NF003471">
    <property type="entry name" value="PRK05097.1"/>
    <property type="match status" value="1"/>
</dbReference>
<dbReference type="Pfam" id="PF06303">
    <property type="entry name" value="MatP"/>
    <property type="match status" value="1"/>
</dbReference>
<dbReference type="Pfam" id="PF17414">
    <property type="entry name" value="MatP_C"/>
    <property type="match status" value="1"/>
</dbReference>
<keyword id="KW-0131">Cell cycle</keyword>
<keyword id="KW-0132">Cell division</keyword>
<keyword id="KW-0963">Cytoplasm</keyword>
<keyword id="KW-0238">DNA-binding</keyword>
<proteinExistence type="inferred from homology"/>
<gene>
    <name evidence="1" type="primary">matP</name>
    <name type="ordered locus">NTHI1647</name>
</gene>
<organism>
    <name type="scientific">Haemophilus influenzae (strain 86-028NP)</name>
    <dbReference type="NCBI Taxonomy" id="281310"/>
    <lineage>
        <taxon>Bacteria</taxon>
        <taxon>Pseudomonadati</taxon>
        <taxon>Pseudomonadota</taxon>
        <taxon>Gammaproteobacteria</taxon>
        <taxon>Pasteurellales</taxon>
        <taxon>Pasteurellaceae</taxon>
        <taxon>Haemophilus</taxon>
    </lineage>
</organism>
<accession>Q4QKK3</accession>
<feature type="chain" id="PRO_1000064630" description="Macrodomain Ter protein">
    <location>
        <begin position="1"/>
        <end position="148"/>
    </location>
</feature>
<evidence type="ECO:0000255" key="1">
    <source>
        <dbReference type="HAMAP-Rule" id="MF_01073"/>
    </source>
</evidence>